<organism>
    <name type="scientific">Coxiella burnetii (strain RSA 331 / Henzerling II)</name>
    <dbReference type="NCBI Taxonomy" id="360115"/>
    <lineage>
        <taxon>Bacteria</taxon>
        <taxon>Pseudomonadati</taxon>
        <taxon>Pseudomonadota</taxon>
        <taxon>Gammaproteobacteria</taxon>
        <taxon>Legionellales</taxon>
        <taxon>Coxiellaceae</taxon>
        <taxon>Coxiella</taxon>
    </lineage>
</organism>
<proteinExistence type="inferred from homology"/>
<comment type="function">
    <text evidence="1">Catalyzes the reversible formation of acyl-phosphate (acyl-PO(4)) from acyl-[acyl-carrier-protein] (acyl-ACP). This enzyme utilizes acyl-ACP as fatty acyl donor, but not acyl-CoA.</text>
</comment>
<comment type="catalytic activity">
    <reaction evidence="1">
        <text>a fatty acyl-[ACP] + phosphate = an acyl phosphate + holo-[ACP]</text>
        <dbReference type="Rhea" id="RHEA:42292"/>
        <dbReference type="Rhea" id="RHEA-COMP:9685"/>
        <dbReference type="Rhea" id="RHEA-COMP:14125"/>
        <dbReference type="ChEBI" id="CHEBI:43474"/>
        <dbReference type="ChEBI" id="CHEBI:59918"/>
        <dbReference type="ChEBI" id="CHEBI:64479"/>
        <dbReference type="ChEBI" id="CHEBI:138651"/>
        <dbReference type="EC" id="2.3.1.274"/>
    </reaction>
</comment>
<comment type="pathway">
    <text evidence="1">Lipid metabolism; phospholipid metabolism.</text>
</comment>
<comment type="subunit">
    <text evidence="1">Homodimer. Probably interacts with PlsY.</text>
</comment>
<comment type="subcellular location">
    <subcellularLocation>
        <location evidence="1">Cytoplasm</location>
    </subcellularLocation>
    <text evidence="1">Associated with the membrane possibly through PlsY.</text>
</comment>
<comment type="similarity">
    <text evidence="1">Belongs to the PlsX family.</text>
</comment>
<accession>A9NBY2</accession>
<sequence>MLKTIALDAMGGDNGPKVIVPAALSILKKHPKVKLILVGKEDQLALLIPEKNRKSFGQRLEIIHASEEVGMDEPPSQALRTKKNSSMRVAINLVKEGQAHACVSAGNTGALMATARYVLKTLPGIDRPAIIAAFPTKNEREVRVLDLGANVDSTPENLYQFAVMGSILSSAAHNIRNPRIGLLNVGEEEIKGNELVKKANELFETRKTINYIGYVEGNTIFNNIADVVVCDGFVGNAVLKASEGVAQLIKQHAKEAFSEAWWTKLALLPAIPILKRLIRRVDPERYNGATFLGLNGIVVKSHGSANIKAFVCAVEEAIFQVDKNIPQLIKEEVAHILKEFENK</sequence>
<dbReference type="EC" id="2.3.1.274" evidence="1"/>
<dbReference type="EMBL" id="CP000890">
    <property type="protein sequence ID" value="ABX78721.1"/>
    <property type="molecule type" value="Genomic_DNA"/>
</dbReference>
<dbReference type="RefSeq" id="WP_010957612.1">
    <property type="nucleotide sequence ID" value="NC_010117.1"/>
</dbReference>
<dbReference type="SMR" id="A9NBY2"/>
<dbReference type="KEGG" id="cbs:COXBURSA331_A0601"/>
<dbReference type="HOGENOM" id="CLU_039379_1_0_6"/>
<dbReference type="UniPathway" id="UPA00085"/>
<dbReference type="GO" id="GO:0005737">
    <property type="term" value="C:cytoplasm"/>
    <property type="evidence" value="ECO:0007669"/>
    <property type="project" value="UniProtKB-SubCell"/>
</dbReference>
<dbReference type="GO" id="GO:0043811">
    <property type="term" value="F:phosphate:acyl-[acyl carrier protein] acyltransferase activity"/>
    <property type="evidence" value="ECO:0007669"/>
    <property type="project" value="UniProtKB-UniRule"/>
</dbReference>
<dbReference type="GO" id="GO:0006633">
    <property type="term" value="P:fatty acid biosynthetic process"/>
    <property type="evidence" value="ECO:0007669"/>
    <property type="project" value="UniProtKB-UniRule"/>
</dbReference>
<dbReference type="GO" id="GO:0008654">
    <property type="term" value="P:phospholipid biosynthetic process"/>
    <property type="evidence" value="ECO:0007669"/>
    <property type="project" value="UniProtKB-KW"/>
</dbReference>
<dbReference type="Gene3D" id="3.40.718.10">
    <property type="entry name" value="Isopropylmalate Dehydrogenase"/>
    <property type="match status" value="1"/>
</dbReference>
<dbReference type="HAMAP" id="MF_00019">
    <property type="entry name" value="PlsX"/>
    <property type="match status" value="1"/>
</dbReference>
<dbReference type="InterPro" id="IPR003664">
    <property type="entry name" value="FA_synthesis"/>
</dbReference>
<dbReference type="InterPro" id="IPR012281">
    <property type="entry name" value="Phospholipid_synth_PlsX-like"/>
</dbReference>
<dbReference type="NCBIfam" id="TIGR00182">
    <property type="entry name" value="plsX"/>
    <property type="match status" value="1"/>
</dbReference>
<dbReference type="PANTHER" id="PTHR30100">
    <property type="entry name" value="FATTY ACID/PHOSPHOLIPID SYNTHESIS PROTEIN PLSX"/>
    <property type="match status" value="1"/>
</dbReference>
<dbReference type="PANTHER" id="PTHR30100:SF1">
    <property type="entry name" value="PHOSPHATE ACYLTRANSFERASE"/>
    <property type="match status" value="1"/>
</dbReference>
<dbReference type="Pfam" id="PF02504">
    <property type="entry name" value="FA_synthesis"/>
    <property type="match status" value="1"/>
</dbReference>
<dbReference type="PIRSF" id="PIRSF002465">
    <property type="entry name" value="Phsphlp_syn_PlsX"/>
    <property type="match status" value="1"/>
</dbReference>
<dbReference type="SUPFAM" id="SSF53659">
    <property type="entry name" value="Isocitrate/Isopropylmalate dehydrogenase-like"/>
    <property type="match status" value="1"/>
</dbReference>
<feature type="chain" id="PRO_1000074163" description="Phosphate acyltransferase">
    <location>
        <begin position="1"/>
        <end position="343"/>
    </location>
</feature>
<name>PLSX_COXBR</name>
<gene>
    <name evidence="1" type="primary">plsX</name>
    <name type="ordered locus">COXBURSA331_A0601</name>
</gene>
<protein>
    <recommendedName>
        <fullName evidence="1">Phosphate acyltransferase</fullName>
        <ecNumber evidence="1">2.3.1.274</ecNumber>
    </recommendedName>
    <alternativeName>
        <fullName evidence="1">Acyl-ACP phosphotransacylase</fullName>
    </alternativeName>
    <alternativeName>
        <fullName evidence="1">Acyl-[acyl-carrier-protein]--phosphate acyltransferase</fullName>
    </alternativeName>
    <alternativeName>
        <fullName evidence="1">Phosphate-acyl-ACP acyltransferase</fullName>
    </alternativeName>
</protein>
<evidence type="ECO:0000255" key="1">
    <source>
        <dbReference type="HAMAP-Rule" id="MF_00019"/>
    </source>
</evidence>
<keyword id="KW-0963">Cytoplasm</keyword>
<keyword id="KW-0444">Lipid biosynthesis</keyword>
<keyword id="KW-0443">Lipid metabolism</keyword>
<keyword id="KW-0594">Phospholipid biosynthesis</keyword>
<keyword id="KW-1208">Phospholipid metabolism</keyword>
<keyword id="KW-0808">Transferase</keyword>
<reference key="1">
    <citation type="submission" date="2007-11" db="EMBL/GenBank/DDBJ databases">
        <title>Genome sequencing of phylogenetically and phenotypically diverse Coxiella burnetii isolates.</title>
        <authorList>
            <person name="Seshadri R."/>
            <person name="Samuel J.E."/>
        </authorList>
    </citation>
    <scope>NUCLEOTIDE SEQUENCE [LARGE SCALE GENOMIC DNA]</scope>
    <source>
        <strain>RSA 331 / Henzerling II</strain>
    </source>
</reference>